<dbReference type="EMBL" id="CP000316">
    <property type="protein sequence ID" value="ABE42795.1"/>
    <property type="molecule type" value="Genomic_DNA"/>
</dbReference>
<dbReference type="RefSeq" id="WP_011481797.1">
    <property type="nucleotide sequence ID" value="NC_007948.1"/>
</dbReference>
<dbReference type="SMR" id="Q12F97"/>
<dbReference type="STRING" id="296591.Bpro_0839"/>
<dbReference type="KEGG" id="pol:Bpro_0839"/>
<dbReference type="eggNOG" id="COG0261">
    <property type="taxonomic scope" value="Bacteria"/>
</dbReference>
<dbReference type="HOGENOM" id="CLU_061463_3_2_4"/>
<dbReference type="OrthoDB" id="9813334at2"/>
<dbReference type="Proteomes" id="UP000001983">
    <property type="component" value="Chromosome"/>
</dbReference>
<dbReference type="GO" id="GO:0005737">
    <property type="term" value="C:cytoplasm"/>
    <property type="evidence" value="ECO:0007669"/>
    <property type="project" value="UniProtKB-ARBA"/>
</dbReference>
<dbReference type="GO" id="GO:1990904">
    <property type="term" value="C:ribonucleoprotein complex"/>
    <property type="evidence" value="ECO:0007669"/>
    <property type="project" value="UniProtKB-KW"/>
</dbReference>
<dbReference type="GO" id="GO:0005840">
    <property type="term" value="C:ribosome"/>
    <property type="evidence" value="ECO:0007669"/>
    <property type="project" value="UniProtKB-KW"/>
</dbReference>
<dbReference type="GO" id="GO:0019843">
    <property type="term" value="F:rRNA binding"/>
    <property type="evidence" value="ECO:0007669"/>
    <property type="project" value="UniProtKB-UniRule"/>
</dbReference>
<dbReference type="GO" id="GO:0003735">
    <property type="term" value="F:structural constituent of ribosome"/>
    <property type="evidence" value="ECO:0007669"/>
    <property type="project" value="InterPro"/>
</dbReference>
<dbReference type="GO" id="GO:0006412">
    <property type="term" value="P:translation"/>
    <property type="evidence" value="ECO:0007669"/>
    <property type="project" value="UniProtKB-UniRule"/>
</dbReference>
<dbReference type="HAMAP" id="MF_01363">
    <property type="entry name" value="Ribosomal_bL21"/>
    <property type="match status" value="1"/>
</dbReference>
<dbReference type="InterPro" id="IPR028909">
    <property type="entry name" value="bL21-like"/>
</dbReference>
<dbReference type="InterPro" id="IPR036164">
    <property type="entry name" value="bL21-like_sf"/>
</dbReference>
<dbReference type="InterPro" id="IPR001787">
    <property type="entry name" value="Ribosomal_bL21"/>
</dbReference>
<dbReference type="InterPro" id="IPR018258">
    <property type="entry name" value="Ribosomal_bL21_CS"/>
</dbReference>
<dbReference type="NCBIfam" id="TIGR00061">
    <property type="entry name" value="L21"/>
    <property type="match status" value="1"/>
</dbReference>
<dbReference type="PANTHER" id="PTHR21349">
    <property type="entry name" value="50S RIBOSOMAL PROTEIN L21"/>
    <property type="match status" value="1"/>
</dbReference>
<dbReference type="PANTHER" id="PTHR21349:SF0">
    <property type="entry name" value="LARGE RIBOSOMAL SUBUNIT PROTEIN BL21M"/>
    <property type="match status" value="1"/>
</dbReference>
<dbReference type="Pfam" id="PF00829">
    <property type="entry name" value="Ribosomal_L21p"/>
    <property type="match status" value="1"/>
</dbReference>
<dbReference type="SUPFAM" id="SSF141091">
    <property type="entry name" value="L21p-like"/>
    <property type="match status" value="1"/>
</dbReference>
<dbReference type="PROSITE" id="PS01169">
    <property type="entry name" value="RIBOSOMAL_L21"/>
    <property type="match status" value="1"/>
</dbReference>
<keyword id="KW-1185">Reference proteome</keyword>
<keyword id="KW-0687">Ribonucleoprotein</keyword>
<keyword id="KW-0689">Ribosomal protein</keyword>
<keyword id="KW-0694">RNA-binding</keyword>
<keyword id="KW-0699">rRNA-binding</keyword>
<organism>
    <name type="scientific">Polaromonas sp. (strain JS666 / ATCC BAA-500)</name>
    <dbReference type="NCBI Taxonomy" id="296591"/>
    <lineage>
        <taxon>Bacteria</taxon>
        <taxon>Pseudomonadati</taxon>
        <taxon>Pseudomonadota</taxon>
        <taxon>Betaproteobacteria</taxon>
        <taxon>Burkholderiales</taxon>
        <taxon>Comamonadaceae</taxon>
        <taxon>Polaromonas</taxon>
    </lineage>
</organism>
<comment type="function">
    <text evidence="1">This protein binds to 23S rRNA in the presence of protein L20.</text>
</comment>
<comment type="subunit">
    <text evidence="1">Part of the 50S ribosomal subunit. Contacts protein L20.</text>
</comment>
<comment type="similarity">
    <text evidence="1">Belongs to the bacterial ribosomal protein bL21 family.</text>
</comment>
<protein>
    <recommendedName>
        <fullName evidence="1">Large ribosomal subunit protein bL21</fullName>
    </recommendedName>
    <alternativeName>
        <fullName evidence="2">50S ribosomal protein L21</fullName>
    </alternativeName>
</protein>
<sequence length="103" mass="11266">MYAVIKTGGKQYKVAAGEKIKVEQIAADVGQEIVIDQVLAVGEGSAIKVGTPLVSGATVTVTVLSHGRHDKVRIFKMRRRKHYQKRQGHRQNFTELQIGAIVG</sequence>
<evidence type="ECO:0000255" key="1">
    <source>
        <dbReference type="HAMAP-Rule" id="MF_01363"/>
    </source>
</evidence>
<evidence type="ECO:0000305" key="2"/>
<name>RL21_POLSJ</name>
<feature type="chain" id="PRO_0000269358" description="Large ribosomal subunit protein bL21">
    <location>
        <begin position="1"/>
        <end position="103"/>
    </location>
</feature>
<gene>
    <name evidence="1" type="primary">rplU</name>
    <name type="ordered locus">Bpro_0839</name>
</gene>
<accession>Q12F97</accession>
<proteinExistence type="inferred from homology"/>
<reference key="1">
    <citation type="journal article" date="2008" name="Appl. Environ. Microbiol.">
        <title>The genome of Polaromonas sp. strain JS666: insights into the evolution of a hydrocarbon- and xenobiotic-degrading bacterium, and features of relevance to biotechnology.</title>
        <authorList>
            <person name="Mattes T.E."/>
            <person name="Alexander A.K."/>
            <person name="Richardson P.M."/>
            <person name="Munk A.C."/>
            <person name="Han C.S."/>
            <person name="Stothard P."/>
            <person name="Coleman N.V."/>
        </authorList>
    </citation>
    <scope>NUCLEOTIDE SEQUENCE [LARGE SCALE GENOMIC DNA]</scope>
    <source>
        <strain>JS666 / ATCC BAA-500</strain>
    </source>
</reference>